<organism>
    <name type="scientific">Chlamydia pneumoniae</name>
    <name type="common">Chlamydophila pneumoniae</name>
    <dbReference type="NCBI Taxonomy" id="83558"/>
    <lineage>
        <taxon>Bacteria</taxon>
        <taxon>Pseudomonadati</taxon>
        <taxon>Chlamydiota</taxon>
        <taxon>Chlamydiia</taxon>
        <taxon>Chlamydiales</taxon>
        <taxon>Chlamydiaceae</taxon>
        <taxon>Chlamydia/Chlamydophila group</taxon>
        <taxon>Chlamydia</taxon>
    </lineage>
</organism>
<name>ACCA_CHLPN</name>
<accession>Q9Z8C9</accession>
<accession>Q7AIT5</accession>
<accession>Q7BXD4</accession>
<accession>Q7DET0</accession>
<evidence type="ECO:0000255" key="1">
    <source>
        <dbReference type="HAMAP-Rule" id="MF_00823"/>
    </source>
</evidence>
<evidence type="ECO:0000255" key="2">
    <source>
        <dbReference type="PROSITE-ProRule" id="PRU01137"/>
    </source>
</evidence>
<comment type="function">
    <text evidence="1">Component of the acetyl coenzyme A carboxylase (ACC) complex. First, biotin carboxylase catalyzes the carboxylation of biotin on its carrier protein (BCCP) and then the CO(2) group is transferred by the carboxyltransferase to acetyl-CoA to form malonyl-CoA.</text>
</comment>
<comment type="catalytic activity">
    <reaction evidence="1">
        <text>N(6)-carboxybiotinyl-L-lysyl-[protein] + acetyl-CoA = N(6)-biotinyl-L-lysyl-[protein] + malonyl-CoA</text>
        <dbReference type="Rhea" id="RHEA:54728"/>
        <dbReference type="Rhea" id="RHEA-COMP:10505"/>
        <dbReference type="Rhea" id="RHEA-COMP:10506"/>
        <dbReference type="ChEBI" id="CHEBI:57288"/>
        <dbReference type="ChEBI" id="CHEBI:57384"/>
        <dbReference type="ChEBI" id="CHEBI:83144"/>
        <dbReference type="ChEBI" id="CHEBI:83145"/>
        <dbReference type="EC" id="2.1.3.15"/>
    </reaction>
</comment>
<comment type="pathway">
    <text evidence="1">Lipid metabolism; malonyl-CoA biosynthesis; malonyl-CoA from acetyl-CoA: step 1/1.</text>
</comment>
<comment type="subunit">
    <text evidence="1">Acetyl-CoA carboxylase is a heterohexamer composed of biotin carboxyl carrier protein (AccB), biotin carboxylase (AccC) and two subunits each of ACCase subunit alpha (AccA) and ACCase subunit beta (AccD).</text>
</comment>
<comment type="subcellular location">
    <subcellularLocation>
        <location evidence="1">Cytoplasm</location>
    </subcellularLocation>
</comment>
<comment type="similarity">
    <text evidence="1">Belongs to the AccA family.</text>
</comment>
<reference key="1">
    <citation type="journal article" date="1999" name="Nat. Genet.">
        <title>Comparative genomes of Chlamydia pneumoniae and C. trachomatis.</title>
        <authorList>
            <person name="Kalman S."/>
            <person name="Mitchell W.P."/>
            <person name="Marathe R."/>
            <person name="Lammel C.J."/>
            <person name="Fan J."/>
            <person name="Hyman R.W."/>
            <person name="Olinger L."/>
            <person name="Grimwood J."/>
            <person name="Davis R.W."/>
            <person name="Stephens R.S."/>
        </authorList>
    </citation>
    <scope>NUCLEOTIDE SEQUENCE [LARGE SCALE GENOMIC DNA]</scope>
    <source>
        <strain>CWL029</strain>
    </source>
</reference>
<reference key="2">
    <citation type="journal article" date="2000" name="Nucleic Acids Res.">
        <title>Genome sequences of Chlamydia trachomatis MoPn and Chlamydia pneumoniae AR39.</title>
        <authorList>
            <person name="Read T.D."/>
            <person name="Brunham R.C."/>
            <person name="Shen C."/>
            <person name="Gill S.R."/>
            <person name="Heidelberg J.F."/>
            <person name="White O."/>
            <person name="Hickey E.K."/>
            <person name="Peterson J.D."/>
            <person name="Utterback T.R."/>
            <person name="Berry K.J."/>
            <person name="Bass S."/>
            <person name="Linher K.D."/>
            <person name="Weidman J.F."/>
            <person name="Khouri H.M."/>
            <person name="Craven B."/>
            <person name="Bowman C."/>
            <person name="Dodson R.J."/>
            <person name="Gwinn M.L."/>
            <person name="Nelson W.C."/>
            <person name="DeBoy R.T."/>
            <person name="Kolonay J.F."/>
            <person name="McClarty G."/>
            <person name="Salzberg S.L."/>
            <person name="Eisen J.A."/>
            <person name="Fraser C.M."/>
        </authorList>
    </citation>
    <scope>NUCLEOTIDE SEQUENCE [LARGE SCALE GENOMIC DNA]</scope>
    <source>
        <strain>AR39</strain>
    </source>
</reference>
<reference key="3">
    <citation type="journal article" date="2000" name="Nucleic Acids Res.">
        <title>Comparison of whole genome sequences of Chlamydia pneumoniae J138 from Japan and CWL029 from USA.</title>
        <authorList>
            <person name="Shirai M."/>
            <person name="Hirakawa H."/>
            <person name="Kimoto M."/>
            <person name="Tabuchi M."/>
            <person name="Kishi F."/>
            <person name="Ouchi K."/>
            <person name="Shiba T."/>
            <person name="Ishii K."/>
            <person name="Hattori M."/>
            <person name="Kuhara S."/>
            <person name="Nakazawa T."/>
        </authorList>
    </citation>
    <scope>NUCLEOTIDE SEQUENCE [LARGE SCALE GENOMIC DNA]</scope>
    <source>
        <strain>J138</strain>
    </source>
</reference>
<reference key="4">
    <citation type="submission" date="2002-05" db="EMBL/GenBank/DDBJ databases">
        <title>The genome sequence of Chlamydia pneumoniae TW183 and comparison with other Chlamydia strains based on whole genome sequence analysis.</title>
        <authorList>
            <person name="Geng M.M."/>
            <person name="Schuhmacher A."/>
            <person name="Muehldorfer I."/>
            <person name="Bensch K.W."/>
            <person name="Schaefer K.P."/>
            <person name="Schneider S."/>
            <person name="Pohl T."/>
            <person name="Essig A."/>
            <person name="Marre R."/>
            <person name="Melchers K."/>
        </authorList>
    </citation>
    <scope>NUCLEOTIDE SEQUENCE [LARGE SCALE GENOMIC DNA]</scope>
    <source>
        <strain>TW-183</strain>
    </source>
</reference>
<sequence length="324" mass="36347">MELLPHEKQVVEYEKAIAEFKEKNKKNSLLSSSEIQKLEKRLDKLKEKIYSDLTPWERVQICRHPSRPRTVNYIEGMCEEFVELCGDRTFRDDPAVVGGFVKIQGQRFVLIGQEKGCDTASRLHRNFGMLCPEGFRKALRLGKLAEKFGLPVVFLVDTPGAYPGLTAEERGQGWAIAKNLFELSRLATPVIIVVIGEGCSGGALGMAVGDSVAMLEHSYYSVISPEGCASILWKDPKKNSEAASMLKMHGENLKQFGIIDTVIKEPIGGAHHDPALVYSNVREFIIQEWLRLKDLAIEELLEKRYEKFRSIGLYETTSESGPEA</sequence>
<keyword id="KW-0067">ATP-binding</keyword>
<keyword id="KW-0963">Cytoplasm</keyword>
<keyword id="KW-0275">Fatty acid biosynthesis</keyword>
<keyword id="KW-0276">Fatty acid metabolism</keyword>
<keyword id="KW-0444">Lipid biosynthesis</keyword>
<keyword id="KW-0443">Lipid metabolism</keyword>
<keyword id="KW-0547">Nucleotide-binding</keyword>
<keyword id="KW-0808">Transferase</keyword>
<protein>
    <recommendedName>
        <fullName evidence="1">Acetyl-coenzyme A carboxylase carboxyl transferase subunit alpha</fullName>
        <shortName evidence="1">ACCase subunit alpha</shortName>
        <shortName evidence="1">Acetyl-CoA carboxylase carboxyltransferase subunit alpha</shortName>
        <ecNumber evidence="1">2.1.3.15</ecNumber>
    </recommendedName>
</protein>
<dbReference type="EC" id="2.1.3.15" evidence="1"/>
<dbReference type="EMBL" id="AE001363">
    <property type="protein sequence ID" value="AAD18558.1"/>
    <property type="molecule type" value="Genomic_DNA"/>
</dbReference>
<dbReference type="EMBL" id="AE002161">
    <property type="protein sequence ID" value="AAF38194.1"/>
    <property type="molecule type" value="Genomic_DNA"/>
</dbReference>
<dbReference type="EMBL" id="BA000008">
    <property type="protein sequence ID" value="BAA98622.1"/>
    <property type="molecule type" value="Genomic_DNA"/>
</dbReference>
<dbReference type="EMBL" id="AE009440">
    <property type="protein sequence ID" value="AAP98361.1"/>
    <property type="molecule type" value="Genomic_DNA"/>
</dbReference>
<dbReference type="PIR" id="D86542">
    <property type="entry name" value="D86542"/>
</dbReference>
<dbReference type="PIR" id="E72083">
    <property type="entry name" value="E72083"/>
</dbReference>
<dbReference type="RefSeq" id="NP_224614.1">
    <property type="nucleotide sequence ID" value="NC_000922.1"/>
</dbReference>
<dbReference type="RefSeq" id="WP_010883057.1">
    <property type="nucleotide sequence ID" value="NZ_LN847257.1"/>
</dbReference>
<dbReference type="SMR" id="Q9Z8C9"/>
<dbReference type="STRING" id="406984.CPK_ORF00923"/>
<dbReference type="GeneID" id="45050460"/>
<dbReference type="KEGG" id="cpa:CP_0340"/>
<dbReference type="KEGG" id="cpj:accA"/>
<dbReference type="KEGG" id="cpn:CPn_0414"/>
<dbReference type="KEGG" id="cpt:CpB0430"/>
<dbReference type="PATRIC" id="fig|115713.3.peg.458"/>
<dbReference type="eggNOG" id="COG0825">
    <property type="taxonomic scope" value="Bacteria"/>
</dbReference>
<dbReference type="HOGENOM" id="CLU_015486_0_2_0"/>
<dbReference type="OMA" id="RNFGMAN"/>
<dbReference type="OrthoDB" id="9808023at2"/>
<dbReference type="UniPathway" id="UPA00655">
    <property type="reaction ID" value="UER00711"/>
</dbReference>
<dbReference type="Proteomes" id="UP000000583">
    <property type="component" value="Chromosome"/>
</dbReference>
<dbReference type="Proteomes" id="UP000000801">
    <property type="component" value="Chromosome"/>
</dbReference>
<dbReference type="GO" id="GO:0009317">
    <property type="term" value="C:acetyl-CoA carboxylase complex"/>
    <property type="evidence" value="ECO:0007669"/>
    <property type="project" value="InterPro"/>
</dbReference>
<dbReference type="GO" id="GO:0003989">
    <property type="term" value="F:acetyl-CoA carboxylase activity"/>
    <property type="evidence" value="ECO:0007669"/>
    <property type="project" value="InterPro"/>
</dbReference>
<dbReference type="GO" id="GO:0005524">
    <property type="term" value="F:ATP binding"/>
    <property type="evidence" value="ECO:0007669"/>
    <property type="project" value="UniProtKB-KW"/>
</dbReference>
<dbReference type="GO" id="GO:0016743">
    <property type="term" value="F:carboxyl- or carbamoyltransferase activity"/>
    <property type="evidence" value="ECO:0007669"/>
    <property type="project" value="UniProtKB-UniRule"/>
</dbReference>
<dbReference type="GO" id="GO:0006633">
    <property type="term" value="P:fatty acid biosynthetic process"/>
    <property type="evidence" value="ECO:0007669"/>
    <property type="project" value="UniProtKB-KW"/>
</dbReference>
<dbReference type="GO" id="GO:2001295">
    <property type="term" value="P:malonyl-CoA biosynthetic process"/>
    <property type="evidence" value="ECO:0007669"/>
    <property type="project" value="UniProtKB-UniRule"/>
</dbReference>
<dbReference type="Gene3D" id="3.90.226.10">
    <property type="entry name" value="2-enoyl-CoA Hydratase, Chain A, domain 1"/>
    <property type="match status" value="1"/>
</dbReference>
<dbReference type="HAMAP" id="MF_00823">
    <property type="entry name" value="AcetylCoA_CT_alpha"/>
    <property type="match status" value="1"/>
</dbReference>
<dbReference type="InterPro" id="IPR001095">
    <property type="entry name" value="Acetyl_CoA_COase_a_su"/>
</dbReference>
<dbReference type="InterPro" id="IPR029045">
    <property type="entry name" value="ClpP/crotonase-like_dom_sf"/>
</dbReference>
<dbReference type="InterPro" id="IPR011763">
    <property type="entry name" value="COA_CT_C"/>
</dbReference>
<dbReference type="NCBIfam" id="TIGR00513">
    <property type="entry name" value="accA"/>
    <property type="match status" value="1"/>
</dbReference>
<dbReference type="NCBIfam" id="NF041504">
    <property type="entry name" value="AccA_sub"/>
    <property type="match status" value="1"/>
</dbReference>
<dbReference type="NCBIfam" id="NF004344">
    <property type="entry name" value="PRK05724.1"/>
    <property type="match status" value="1"/>
</dbReference>
<dbReference type="PANTHER" id="PTHR42853">
    <property type="entry name" value="ACETYL-COENZYME A CARBOXYLASE CARBOXYL TRANSFERASE SUBUNIT ALPHA"/>
    <property type="match status" value="1"/>
</dbReference>
<dbReference type="PANTHER" id="PTHR42853:SF3">
    <property type="entry name" value="ACETYL-COENZYME A CARBOXYLASE CARBOXYL TRANSFERASE SUBUNIT ALPHA, CHLOROPLASTIC"/>
    <property type="match status" value="1"/>
</dbReference>
<dbReference type="Pfam" id="PF03255">
    <property type="entry name" value="ACCA"/>
    <property type="match status" value="1"/>
</dbReference>
<dbReference type="PRINTS" id="PR01069">
    <property type="entry name" value="ACCCTRFRASEA"/>
</dbReference>
<dbReference type="SUPFAM" id="SSF52096">
    <property type="entry name" value="ClpP/crotonase"/>
    <property type="match status" value="1"/>
</dbReference>
<dbReference type="PROSITE" id="PS50989">
    <property type="entry name" value="COA_CT_CTER"/>
    <property type="match status" value="1"/>
</dbReference>
<gene>
    <name evidence="1" type="primary">accA</name>
    <name type="ordered locus">CPn_0414</name>
    <name type="ordered locus">CP_0340</name>
    <name type="ordered locus">CPj0414</name>
    <name type="ordered locus">CpB0430</name>
</gene>
<proteinExistence type="inferred from homology"/>
<feature type="chain" id="PRO_0000223752" description="Acetyl-coenzyme A carboxylase carboxyl transferase subunit alpha">
    <location>
        <begin position="1"/>
        <end position="324"/>
    </location>
</feature>
<feature type="domain" description="CoA carboxyltransferase C-terminal" evidence="2">
    <location>
        <begin position="37"/>
        <end position="291"/>
    </location>
</feature>